<comment type="subcellular location">
    <subcellularLocation>
        <location evidence="1">Virion</location>
    </subcellularLocation>
</comment>
<comment type="induction">
    <text evidence="2">Expressed in the late phase of the viral replicative cycle.</text>
</comment>
<comment type="similarity">
    <text evidence="2">Belongs to the asfivirus C717R family.</text>
</comment>
<evidence type="ECO:0000250" key="1">
    <source>
        <dbReference type="UniProtKB" id="Q65156"/>
    </source>
</evidence>
<evidence type="ECO:0000305" key="2"/>
<protein>
    <recommendedName>
        <fullName>Uncharacterized protein C717R</fullName>
        <shortName>pC717R</shortName>
    </recommendedName>
</protein>
<sequence length="717" mass="83646">MTKLAQWMFEQYVKDLNLKNRGSPSFRKWLTLQPSLLRYSGVMRANAFDILKYGYPMQQSGYTVATLEIHFKNIRSSFANIYWNRDSEEPEYVCCCATYQSHDGEYRYRFVWYQPFIEAYNAIEAALDPLETIILNLIAARDLDFVVHIFPYNKGHEDYLASTQLILKIFIATLLMDILRIKDNTLDVHLNSDYIIVMERLWPHIKDAIEHFFEAHKDLLGYLIAFRNGGNFAGSLRPSCGQKIVPLTIREALQMNDINLAVWREVFIMQECSDLVINGIAPCFPIFNTWTYLQGINQIFFENTSLQEKFKKDFIARELSKEIIKGQKTLNDKEFKKLSLHQIQYMESFLLMSDVAIMITTEYVGYTLQSLPGIISRSSYLSPIVKNILMDEDSFMSLLFDLCYGAYVLHKKENVIHADLHLNNMTYYHFNPTSFTDRNKPGKYTLKVKNPVIAFITGPKVETETYVFKHIDGFGCIIDFSRAIMGPNHAIKLERQYGLAFVNTFYRNQSEHILKVLRFYFPEMLTNRENEIQGVILSNFNFFFNSITAIDFYAIARNLRSMLSLDYLHTSEVKRNVEISQTFLDTCQFLEEKAVEFLFKNLHTVLSGKPVEKTAGDVLLPIVFKKFLYPNIPKNILRSFTVIDVYNYNNIKRYSGKAIQTFPPWAQTKEILTHAEGRTFEDIFPRGELVFKKAYAENNHLDKILQRIREQLANENL</sequence>
<reference key="1">
    <citation type="submission" date="2003-03" db="EMBL/GenBank/DDBJ databases">
        <title>African swine fever virus genomes.</title>
        <authorList>
            <person name="Kutish G.F."/>
            <person name="Rock D.L."/>
        </authorList>
    </citation>
    <scope>NUCLEOTIDE SEQUENCE [LARGE SCALE GENOMIC DNA]</scope>
</reference>
<organismHost>
    <name type="scientific">Ornithodoros</name>
    <name type="common">relapsing fever ticks</name>
    <dbReference type="NCBI Taxonomy" id="6937"/>
</organismHost>
<organismHost>
    <name type="scientific">Phacochoerus aethiopicus</name>
    <name type="common">Warthog</name>
    <dbReference type="NCBI Taxonomy" id="85517"/>
</organismHost>
<organismHost>
    <name type="scientific">Phacochoerus africanus</name>
    <name type="common">Warthog</name>
    <dbReference type="NCBI Taxonomy" id="41426"/>
</organismHost>
<organismHost>
    <name type="scientific">Potamochoerus larvatus</name>
    <name type="common">Bushpig</name>
    <dbReference type="NCBI Taxonomy" id="273792"/>
</organismHost>
<organismHost>
    <name type="scientific">Sus scrofa</name>
    <name type="common">Pig</name>
    <dbReference type="NCBI Taxonomy" id="9823"/>
</organismHost>
<dbReference type="EMBL" id="AY261363">
    <property type="status" value="NOT_ANNOTATED_CDS"/>
    <property type="molecule type" value="Genomic_DNA"/>
</dbReference>
<dbReference type="Proteomes" id="UP000000859">
    <property type="component" value="Segment"/>
</dbReference>
<dbReference type="GO" id="GO:0044423">
    <property type="term" value="C:virion component"/>
    <property type="evidence" value="ECO:0007669"/>
    <property type="project" value="UniProtKB-KW"/>
</dbReference>
<dbReference type="InterPro" id="IPR011009">
    <property type="entry name" value="Kinase-like_dom_sf"/>
</dbReference>
<dbReference type="SUPFAM" id="SSF56112">
    <property type="entry name" value="Protein kinase-like (PK-like)"/>
    <property type="match status" value="1"/>
</dbReference>
<organism>
    <name type="scientific">African swine fever virus (isolate Tick/South Africa/Pretoriuskop Pr4/1996)</name>
    <name type="common">ASFV</name>
    <dbReference type="NCBI Taxonomy" id="561443"/>
    <lineage>
        <taxon>Viruses</taxon>
        <taxon>Varidnaviria</taxon>
        <taxon>Bamfordvirae</taxon>
        <taxon>Nucleocytoviricota</taxon>
        <taxon>Pokkesviricetes</taxon>
        <taxon>Asfuvirales</taxon>
        <taxon>Asfarviridae</taxon>
        <taxon>Asfivirus</taxon>
        <taxon>African swine fever virus</taxon>
    </lineage>
</organism>
<feature type="chain" id="PRO_0000373723" description="Uncharacterized protein C717R">
    <location>
        <begin position="1"/>
        <end position="717"/>
    </location>
</feature>
<gene>
    <name type="ordered locus">Pret-076</name>
</gene>
<accession>P0CAJ7</accession>
<proteinExistence type="inferred from homology"/>
<keyword id="KW-0426">Late protein</keyword>
<keyword id="KW-0946">Virion</keyword>
<name>VF717_ASFP4</name>